<accession>Q9D995</accession>
<accession>Q9D9L8</accession>
<comment type="function">
    <text evidence="1 2 3">Plays a role in the different steps of crossover formation during meiotic recombination (PubMed:24891606, PubMed:32555348, PubMed:32640224). Participates in the crossover differentiation step of crossover-specific recombination intermediates through its interaction with PRR19 (PubMed:32555348). In addition, stimulates crossover formation through the interactions with RFC3 and RFC4 and simultaneously regulates cell-cycle progression through interactions with CDC34 and subsequent ubiquitination of WEE1 (PubMed:32640224). May also participates in an active deselection process that destabilizes or removes excess pre-CO intermediates (PubMed:24891606).</text>
</comment>
<comment type="subunit">
    <text evidence="2 3">Interacts with PRR19; this interaction promotes crossover formation (PubMed:32555348). Interacts with RFC3 and RFC4; these interactions facilitate crossover formation (PubMed:32640224). Interacts with CDC34; this interaction regulates the cell-cycle progression (PubMed:32640224).</text>
</comment>
<comment type="subcellular location">
    <subcellularLocation>
        <location evidence="3">Nucleus</location>
    </subcellularLocation>
    <subcellularLocation>
        <location evidence="3">Cytoplasm</location>
    </subcellularLocation>
    <subcellularLocation>
        <location evidence="2">Chromosome</location>
    </subcellularLocation>
    <text evidence="2 3">Shuttles between the nucleus and cytoplasm in a stage-specific manner of prophase I cells (PubMed:32640224). Co-localized at crossover sites with PRR19 (PubMed:32555348).</text>
</comment>
<comment type="alternative products">
    <event type="alternative splicing"/>
    <isoform>
        <id>Q9D995-1</id>
        <name>1</name>
        <sequence type="displayed"/>
    </isoform>
    <isoform>
        <id>Q9D995-3</id>
        <name evidence="4">2</name>
        <sequence type="described" ref="VSP_061282"/>
    </isoform>
</comment>
<comment type="tissue specificity">
    <text evidence="3">Isoform 2 is expressed in spermatocyte.</text>
</comment>
<comment type="disruption phenotype">
    <text evidence="1">Homozygous knockout mice for CNTD1 are grossly similar to wild-type, surviving into adulthood and exhibiting appropriate mating behavior. Males are sterile with a decreased testis size. Females are also sterile.</text>
</comment>
<comment type="sequence caution" evidence="5">
    <conflict type="miscellaneous discrepancy">
        <sequence resource="EMBL-CDS" id="BAB24728"/>
    </conflict>
    <text>Probable cloning artifact.</text>
</comment>
<gene>
    <name evidence="6" type="primary">Cntd1</name>
    <name type="synonym">Cntd</name>
</gene>
<reference key="1">
    <citation type="journal article" date="2005" name="Science">
        <title>The transcriptional landscape of the mammalian genome.</title>
        <authorList>
            <person name="Carninci P."/>
            <person name="Kasukawa T."/>
            <person name="Katayama S."/>
            <person name="Gough J."/>
            <person name="Frith M.C."/>
            <person name="Maeda N."/>
            <person name="Oyama R."/>
            <person name="Ravasi T."/>
            <person name="Lenhard B."/>
            <person name="Wells C."/>
            <person name="Kodzius R."/>
            <person name="Shimokawa K."/>
            <person name="Bajic V.B."/>
            <person name="Brenner S.E."/>
            <person name="Batalov S."/>
            <person name="Forrest A.R."/>
            <person name="Zavolan M."/>
            <person name="Davis M.J."/>
            <person name="Wilming L.G."/>
            <person name="Aidinis V."/>
            <person name="Allen J.E."/>
            <person name="Ambesi-Impiombato A."/>
            <person name="Apweiler R."/>
            <person name="Aturaliya R.N."/>
            <person name="Bailey T.L."/>
            <person name="Bansal M."/>
            <person name="Baxter L."/>
            <person name="Beisel K.W."/>
            <person name="Bersano T."/>
            <person name="Bono H."/>
            <person name="Chalk A.M."/>
            <person name="Chiu K.P."/>
            <person name="Choudhary V."/>
            <person name="Christoffels A."/>
            <person name="Clutterbuck D.R."/>
            <person name="Crowe M.L."/>
            <person name="Dalla E."/>
            <person name="Dalrymple B.P."/>
            <person name="de Bono B."/>
            <person name="Della Gatta G."/>
            <person name="di Bernardo D."/>
            <person name="Down T."/>
            <person name="Engstrom P."/>
            <person name="Fagiolini M."/>
            <person name="Faulkner G."/>
            <person name="Fletcher C.F."/>
            <person name="Fukushima T."/>
            <person name="Furuno M."/>
            <person name="Futaki S."/>
            <person name="Gariboldi M."/>
            <person name="Georgii-Hemming P."/>
            <person name="Gingeras T.R."/>
            <person name="Gojobori T."/>
            <person name="Green R.E."/>
            <person name="Gustincich S."/>
            <person name="Harbers M."/>
            <person name="Hayashi Y."/>
            <person name="Hensch T.K."/>
            <person name="Hirokawa N."/>
            <person name="Hill D."/>
            <person name="Huminiecki L."/>
            <person name="Iacono M."/>
            <person name="Ikeo K."/>
            <person name="Iwama A."/>
            <person name="Ishikawa T."/>
            <person name="Jakt M."/>
            <person name="Kanapin A."/>
            <person name="Katoh M."/>
            <person name="Kawasawa Y."/>
            <person name="Kelso J."/>
            <person name="Kitamura H."/>
            <person name="Kitano H."/>
            <person name="Kollias G."/>
            <person name="Krishnan S.P."/>
            <person name="Kruger A."/>
            <person name="Kummerfeld S.K."/>
            <person name="Kurochkin I.V."/>
            <person name="Lareau L.F."/>
            <person name="Lazarevic D."/>
            <person name="Lipovich L."/>
            <person name="Liu J."/>
            <person name="Liuni S."/>
            <person name="McWilliam S."/>
            <person name="Madan Babu M."/>
            <person name="Madera M."/>
            <person name="Marchionni L."/>
            <person name="Matsuda H."/>
            <person name="Matsuzawa S."/>
            <person name="Miki H."/>
            <person name="Mignone F."/>
            <person name="Miyake S."/>
            <person name="Morris K."/>
            <person name="Mottagui-Tabar S."/>
            <person name="Mulder N."/>
            <person name="Nakano N."/>
            <person name="Nakauchi H."/>
            <person name="Ng P."/>
            <person name="Nilsson R."/>
            <person name="Nishiguchi S."/>
            <person name="Nishikawa S."/>
            <person name="Nori F."/>
            <person name="Ohara O."/>
            <person name="Okazaki Y."/>
            <person name="Orlando V."/>
            <person name="Pang K.C."/>
            <person name="Pavan W.J."/>
            <person name="Pavesi G."/>
            <person name="Pesole G."/>
            <person name="Petrovsky N."/>
            <person name="Piazza S."/>
            <person name="Reed J."/>
            <person name="Reid J.F."/>
            <person name="Ring B.Z."/>
            <person name="Ringwald M."/>
            <person name="Rost B."/>
            <person name="Ruan Y."/>
            <person name="Salzberg S.L."/>
            <person name="Sandelin A."/>
            <person name="Schneider C."/>
            <person name="Schoenbach C."/>
            <person name="Sekiguchi K."/>
            <person name="Semple C.A."/>
            <person name="Seno S."/>
            <person name="Sessa L."/>
            <person name="Sheng Y."/>
            <person name="Shibata Y."/>
            <person name="Shimada H."/>
            <person name="Shimada K."/>
            <person name="Silva D."/>
            <person name="Sinclair B."/>
            <person name="Sperling S."/>
            <person name="Stupka E."/>
            <person name="Sugiura K."/>
            <person name="Sultana R."/>
            <person name="Takenaka Y."/>
            <person name="Taki K."/>
            <person name="Tammoja K."/>
            <person name="Tan S.L."/>
            <person name="Tang S."/>
            <person name="Taylor M.S."/>
            <person name="Tegner J."/>
            <person name="Teichmann S.A."/>
            <person name="Ueda H.R."/>
            <person name="van Nimwegen E."/>
            <person name="Verardo R."/>
            <person name="Wei C.L."/>
            <person name="Yagi K."/>
            <person name="Yamanishi H."/>
            <person name="Zabarovsky E."/>
            <person name="Zhu S."/>
            <person name="Zimmer A."/>
            <person name="Hide W."/>
            <person name="Bult C."/>
            <person name="Grimmond S.M."/>
            <person name="Teasdale R.D."/>
            <person name="Liu E.T."/>
            <person name="Brusic V."/>
            <person name="Quackenbush J."/>
            <person name="Wahlestedt C."/>
            <person name="Mattick J.S."/>
            <person name="Hume D.A."/>
            <person name="Kai C."/>
            <person name="Sasaki D."/>
            <person name="Tomaru Y."/>
            <person name="Fukuda S."/>
            <person name="Kanamori-Katayama M."/>
            <person name="Suzuki M."/>
            <person name="Aoki J."/>
            <person name="Arakawa T."/>
            <person name="Iida J."/>
            <person name="Imamura K."/>
            <person name="Itoh M."/>
            <person name="Kato T."/>
            <person name="Kawaji H."/>
            <person name="Kawagashira N."/>
            <person name="Kawashima T."/>
            <person name="Kojima M."/>
            <person name="Kondo S."/>
            <person name="Konno H."/>
            <person name="Nakano K."/>
            <person name="Ninomiya N."/>
            <person name="Nishio T."/>
            <person name="Okada M."/>
            <person name="Plessy C."/>
            <person name="Shibata K."/>
            <person name="Shiraki T."/>
            <person name="Suzuki S."/>
            <person name="Tagami M."/>
            <person name="Waki K."/>
            <person name="Watahiki A."/>
            <person name="Okamura-Oho Y."/>
            <person name="Suzuki H."/>
            <person name="Kawai J."/>
            <person name="Hayashizaki Y."/>
        </authorList>
    </citation>
    <scope>NUCLEOTIDE SEQUENCE [LARGE SCALE MRNA]</scope>
    <source>
        <strain>C57BL/6J</strain>
        <tissue>Testis</tissue>
    </source>
</reference>
<reference key="2">
    <citation type="journal article" date="2009" name="PLoS Biol.">
        <title>Lineage-specific biology revealed by a finished genome assembly of the mouse.</title>
        <authorList>
            <person name="Church D.M."/>
            <person name="Goodstadt L."/>
            <person name="Hillier L.W."/>
            <person name="Zody M.C."/>
            <person name="Goldstein S."/>
            <person name="She X."/>
            <person name="Bult C.J."/>
            <person name="Agarwala R."/>
            <person name="Cherry J.L."/>
            <person name="DiCuccio M."/>
            <person name="Hlavina W."/>
            <person name="Kapustin Y."/>
            <person name="Meric P."/>
            <person name="Maglott D."/>
            <person name="Birtle Z."/>
            <person name="Marques A.C."/>
            <person name="Graves T."/>
            <person name="Zhou S."/>
            <person name="Teague B."/>
            <person name="Potamousis K."/>
            <person name="Churas C."/>
            <person name="Place M."/>
            <person name="Herschleb J."/>
            <person name="Runnheim R."/>
            <person name="Forrest D."/>
            <person name="Amos-Landgraf J."/>
            <person name="Schwartz D.C."/>
            <person name="Cheng Z."/>
            <person name="Lindblad-Toh K."/>
            <person name="Eichler E.E."/>
            <person name="Ponting C.P."/>
        </authorList>
    </citation>
    <scope>NUCLEOTIDE SEQUENCE [LARGE SCALE GENOMIC DNA]</scope>
    <source>
        <strain>C57BL/6J</strain>
    </source>
</reference>
<reference key="3">
    <citation type="journal article" date="2004" name="Genome Res.">
        <title>The status, quality, and expansion of the NIH full-length cDNA project: the Mammalian Gene Collection (MGC).</title>
        <authorList>
            <consortium name="The MGC Project Team"/>
        </authorList>
    </citation>
    <scope>NUCLEOTIDE SEQUENCE [LARGE SCALE MRNA]</scope>
    <source>
        <strain>FVB/N</strain>
        <tissue>Mammary tumor</tissue>
    </source>
</reference>
<reference key="4">
    <citation type="journal article" date="2014" name="J. Cell Biol.">
        <title>Mammalian CNTD1 is critical for meiotic crossover maturation and deselection of excess precrossover sites.</title>
        <authorList>
            <person name="Holloway J.K."/>
            <person name="Sun X."/>
            <person name="Yokoo R."/>
            <person name="Villeneuve A.M."/>
            <person name="Cohen P.E."/>
        </authorList>
    </citation>
    <scope>DISRUPTION PHENOTYPE</scope>
    <scope>FUNCTION</scope>
</reference>
<reference key="5">
    <citation type="journal article" date="2020" name="Cell Rep.">
        <title>Cyclin N-Terminal Domain-Containing-1 Coordinates Meiotic Crossover Formation with Cell-Cycle Progression in a Cyclin-Independent Manner.</title>
        <authorList>
            <person name="Gray S."/>
            <person name="Santiago E.R."/>
            <person name="Chappie J.S."/>
            <person name="Cohen P.E."/>
        </authorList>
    </citation>
    <scope>ALTERNATIVE SPLICING (ISOFORM 2)</scope>
    <scope>TISSUE SPECIFICITY (ISOFORM 2)</scope>
    <scope>SUBCELLULAR LOCATION</scope>
    <scope>FUNCTION</scope>
    <scope>INTERACTION WITH CDC34; RFC3 AND RFC4</scope>
</reference>
<reference key="6">
    <citation type="journal article" date="2020" name="Nat. Commun.">
        <title>Proline-rich protein PRR19 functions with cyclin-like CNTD1 to promote meiotic crossing over in mouse.</title>
        <authorList>
            <person name="Bondarieva A."/>
            <person name="Raveendran K."/>
            <person name="Telychko V."/>
            <person name="Rao H.B.D.P."/>
            <person name="Ravindranathan R."/>
            <person name="Zorzompokou C."/>
            <person name="Finsterbusch F."/>
            <person name="Dereli I."/>
            <person name="Papanikos F."/>
            <person name="Traenkner D."/>
            <person name="Schleiffer A."/>
            <person name="Fei J.F."/>
            <person name="Klimova A."/>
            <person name="Ito M."/>
            <person name="Kulkarni D.S."/>
            <person name="Roeder I."/>
            <person name="Hunter N."/>
            <person name="Toth A."/>
        </authorList>
    </citation>
    <scope>SUBCELLULAR LOCATION</scope>
    <scope>FUNCTION</scope>
    <scope>INTERACTION WITH PRR19</scope>
</reference>
<sequence length="334" mass="37222">MNMEGPLRPRLVNCSDFQFGVVTTETIENALLHLAQQNEQAVKEAAGRTGSFRETRIVEFVFLLSEQWCLEKSVSYQAVEILERFMLKQAEDICRQATLQLRGKDTELQSWRAMKEQLVNKFILRLVSCVQLASKLSFHYKIVSNITVLNFLQALGYVHTKEELLESELDILKSLNFQINLPTPLAYVEMLLEVLGYNGCLVPATQLHATCLTLLDLVYLLHEPIYESLLRASIENSTPSQLQGEKFLSVKEDFMLLAVGIIAASAFIQNHECWSQVIGHLQSITGIASESIAEFSYAILTHSVGANTPGPQQPVPHKAARALRTAAAAASSNT</sequence>
<feature type="chain" id="PRO_0000313716" description="Cyclin N-terminal domain-containing protein 1">
    <location>
        <begin position="1"/>
        <end position="334"/>
    </location>
</feature>
<feature type="domain" description="Cyclin N-terminal">
    <location>
        <begin position="29"/>
        <end position="180"/>
    </location>
</feature>
<feature type="splice variant" id="VSP_061282" description="In isoform 2." evidence="4">
    <location>
        <begin position="1"/>
        <end position="85"/>
    </location>
</feature>
<feature type="sequence conflict" description="In Ref. 1; BAB24728." evidence="5" ref="1">
    <original>Q</original>
    <variation>E</variation>
    <location>
        <position position="178"/>
    </location>
</feature>
<feature type="sequence conflict" description="In Ref. 1; BAB24728." evidence="5" ref="1">
    <original>S</original>
    <variation>R</variation>
    <location>
        <position position="228"/>
    </location>
</feature>
<protein>
    <recommendedName>
        <fullName evidence="5">Cyclin N-terminal domain-containing protein 1</fullName>
    </recommendedName>
</protein>
<name>CNTD1_MOUSE</name>
<organism>
    <name type="scientific">Mus musculus</name>
    <name type="common">Mouse</name>
    <dbReference type="NCBI Taxonomy" id="10090"/>
    <lineage>
        <taxon>Eukaryota</taxon>
        <taxon>Metazoa</taxon>
        <taxon>Chordata</taxon>
        <taxon>Craniata</taxon>
        <taxon>Vertebrata</taxon>
        <taxon>Euteleostomi</taxon>
        <taxon>Mammalia</taxon>
        <taxon>Eutheria</taxon>
        <taxon>Euarchontoglires</taxon>
        <taxon>Glires</taxon>
        <taxon>Rodentia</taxon>
        <taxon>Myomorpha</taxon>
        <taxon>Muroidea</taxon>
        <taxon>Muridae</taxon>
        <taxon>Murinae</taxon>
        <taxon>Mus</taxon>
        <taxon>Mus</taxon>
    </lineage>
</organism>
<evidence type="ECO:0000269" key="1">
    <source>
    </source>
</evidence>
<evidence type="ECO:0000269" key="2">
    <source>
    </source>
</evidence>
<evidence type="ECO:0000269" key="3">
    <source>
    </source>
</evidence>
<evidence type="ECO:0000303" key="4">
    <source>
    </source>
</evidence>
<evidence type="ECO:0000305" key="5"/>
<evidence type="ECO:0000312" key="6">
    <source>
        <dbReference type="MGI" id="MGI:1923965"/>
    </source>
</evidence>
<keyword id="KW-0025">Alternative splicing</keyword>
<keyword id="KW-0158">Chromosome</keyword>
<keyword id="KW-0963">Cytoplasm</keyword>
<keyword id="KW-0469">Meiosis</keyword>
<keyword id="KW-0539">Nucleus</keyword>
<keyword id="KW-1185">Reference proteome</keyword>
<dbReference type="EMBL" id="AK006754">
    <property type="protein sequence ID" value="BAB24728.1"/>
    <property type="status" value="ALT_SEQ"/>
    <property type="molecule type" value="mRNA"/>
</dbReference>
<dbReference type="EMBL" id="AK007245">
    <property type="protein sequence ID" value="BAB24912.1"/>
    <property type="molecule type" value="mRNA"/>
</dbReference>
<dbReference type="EMBL" id="AK049116">
    <property type="protein sequence ID" value="BAC33551.1"/>
    <property type="molecule type" value="mRNA"/>
</dbReference>
<dbReference type="EMBL" id="AL590969">
    <property type="status" value="NOT_ANNOTATED_CDS"/>
    <property type="molecule type" value="Genomic_DNA"/>
</dbReference>
<dbReference type="EMBL" id="BC006866">
    <property type="protein sequence ID" value="AAH06866.1"/>
    <property type="molecule type" value="mRNA"/>
</dbReference>
<dbReference type="CCDS" id="CCDS25461.1">
    <molecule id="Q9D995-1"/>
</dbReference>
<dbReference type="RefSeq" id="NP_080838.1">
    <molecule id="Q9D995-1"/>
    <property type="nucleotide sequence ID" value="NM_026562.2"/>
</dbReference>
<dbReference type="BioGRID" id="212659">
    <property type="interactions" value="1"/>
</dbReference>
<dbReference type="FunCoup" id="Q9D995">
    <property type="interactions" value="167"/>
</dbReference>
<dbReference type="STRING" id="10090.ENSMUSP00000099396"/>
<dbReference type="iPTMnet" id="Q9D995"/>
<dbReference type="PhosphoSitePlus" id="Q9D995"/>
<dbReference type="PaxDb" id="10090-ENSMUSP00000099396"/>
<dbReference type="ProteomicsDB" id="283659"/>
<dbReference type="Antibodypedia" id="17117">
    <property type="antibodies" value="94 antibodies from 22 providers"/>
</dbReference>
<dbReference type="Ensembl" id="ENSMUST00000103107.5">
    <molecule id="Q9D995-1"/>
    <property type="protein sequence ID" value="ENSMUSP00000099396.5"/>
    <property type="gene ID" value="ENSMUSG00000078653.5"/>
</dbReference>
<dbReference type="GeneID" id="68107"/>
<dbReference type="KEGG" id="mmu:68107"/>
<dbReference type="UCSC" id="uc007loi.1">
    <molecule id="Q9D995-1"/>
    <property type="organism name" value="mouse"/>
</dbReference>
<dbReference type="AGR" id="MGI:1923965"/>
<dbReference type="CTD" id="124817"/>
<dbReference type="MGI" id="MGI:1923965">
    <property type="gene designation" value="Cntd1"/>
</dbReference>
<dbReference type="VEuPathDB" id="HostDB:ENSMUSG00000078653"/>
<dbReference type="eggNOG" id="ENOG502QVK8">
    <property type="taxonomic scope" value="Eukaryota"/>
</dbReference>
<dbReference type="GeneTree" id="ENSGT00440000033966"/>
<dbReference type="HOGENOM" id="CLU_072822_0_0_1"/>
<dbReference type="InParanoid" id="Q9D995"/>
<dbReference type="OMA" id="CFKETRI"/>
<dbReference type="OrthoDB" id="9983043at2759"/>
<dbReference type="PhylomeDB" id="Q9D995"/>
<dbReference type="TreeFam" id="TF342669"/>
<dbReference type="BioGRID-ORCS" id="68107">
    <property type="hits" value="3 hits in 78 CRISPR screens"/>
</dbReference>
<dbReference type="PRO" id="PR:Q9D995"/>
<dbReference type="Proteomes" id="UP000000589">
    <property type="component" value="Chromosome 11"/>
</dbReference>
<dbReference type="RNAct" id="Q9D995">
    <property type="molecule type" value="protein"/>
</dbReference>
<dbReference type="Bgee" id="ENSMUSG00000078653">
    <property type="expression patterns" value="Expressed in spermatocyte and 121 other cell types or tissues"/>
</dbReference>
<dbReference type="GO" id="GO:0005694">
    <property type="term" value="C:chromosome"/>
    <property type="evidence" value="ECO:0000314"/>
    <property type="project" value="UniProtKB"/>
</dbReference>
<dbReference type="GO" id="GO:0005737">
    <property type="term" value="C:cytoplasm"/>
    <property type="evidence" value="ECO:0007669"/>
    <property type="project" value="UniProtKB-SubCell"/>
</dbReference>
<dbReference type="GO" id="GO:0005634">
    <property type="term" value="C:nucleus"/>
    <property type="evidence" value="ECO:0007669"/>
    <property type="project" value="UniProtKB-SubCell"/>
</dbReference>
<dbReference type="GO" id="GO:0007131">
    <property type="term" value="P:reciprocal meiotic recombination"/>
    <property type="evidence" value="ECO:0000315"/>
    <property type="project" value="MGI"/>
</dbReference>
<dbReference type="GO" id="GO:0051445">
    <property type="term" value="P:regulation of meiotic cell cycle"/>
    <property type="evidence" value="ECO:0000315"/>
    <property type="project" value="UniProtKB"/>
</dbReference>
<dbReference type="GO" id="GO:0007283">
    <property type="term" value="P:spermatogenesis"/>
    <property type="evidence" value="ECO:0000315"/>
    <property type="project" value="MGI"/>
</dbReference>
<dbReference type="CDD" id="cd20541">
    <property type="entry name" value="CYCLIN_CNTD1"/>
    <property type="match status" value="1"/>
</dbReference>
<dbReference type="FunFam" id="1.10.472.10:FF:000368">
    <property type="entry name" value="Cyclin N-terminal domain-containing protein 1"/>
    <property type="match status" value="1"/>
</dbReference>
<dbReference type="Gene3D" id="1.10.472.10">
    <property type="entry name" value="Cyclin-like"/>
    <property type="match status" value="1"/>
</dbReference>
<dbReference type="InterPro" id="IPR036915">
    <property type="entry name" value="Cyclin-like_sf"/>
</dbReference>
<dbReference type="PANTHER" id="PTHR21615">
    <property type="entry name" value="CYCLIN N-TERMINAL DOMAIN-CONTAINING PROTEIN 1"/>
    <property type="match status" value="1"/>
</dbReference>
<dbReference type="PANTHER" id="PTHR21615:SF2">
    <property type="entry name" value="CYCLIN N-TERMINAL DOMAIN-CONTAINING PROTEIN 1"/>
    <property type="match status" value="1"/>
</dbReference>
<dbReference type="SUPFAM" id="SSF47954">
    <property type="entry name" value="Cyclin-like"/>
    <property type="match status" value="1"/>
</dbReference>
<proteinExistence type="evidence at protein level"/>